<name>MNTH_ECOK1</name>
<protein>
    <recommendedName>
        <fullName evidence="1">Divalent metal cation transporter MntH</fullName>
    </recommendedName>
</protein>
<accession>A1ADR7</accession>
<comment type="function">
    <text evidence="1">H(+)-stimulated, divalent metal cation uptake system.</text>
</comment>
<comment type="subcellular location">
    <subcellularLocation>
        <location evidence="1">Cell inner membrane</location>
        <topology evidence="1">Multi-pass membrane protein</topology>
    </subcellularLocation>
</comment>
<comment type="similarity">
    <text evidence="1">Belongs to the NRAMP family.</text>
</comment>
<dbReference type="EMBL" id="CP000468">
    <property type="protein sequence ID" value="ABJ01807.1"/>
    <property type="molecule type" value="Genomic_DNA"/>
</dbReference>
<dbReference type="RefSeq" id="WP_000186369.1">
    <property type="nucleotide sequence ID" value="NZ_CADILS010000022.1"/>
</dbReference>
<dbReference type="SMR" id="A1ADR7"/>
<dbReference type="KEGG" id="ecv:APECO1_4146"/>
<dbReference type="HOGENOM" id="CLU_020088_2_0_6"/>
<dbReference type="Proteomes" id="UP000008216">
    <property type="component" value="Chromosome"/>
</dbReference>
<dbReference type="GO" id="GO:0005886">
    <property type="term" value="C:plasma membrane"/>
    <property type="evidence" value="ECO:0007669"/>
    <property type="project" value="UniProtKB-SubCell"/>
</dbReference>
<dbReference type="GO" id="GO:0015086">
    <property type="term" value="F:cadmium ion transmembrane transporter activity"/>
    <property type="evidence" value="ECO:0007669"/>
    <property type="project" value="TreeGrafter"/>
</dbReference>
<dbReference type="GO" id="GO:0005384">
    <property type="term" value="F:manganese ion transmembrane transporter activity"/>
    <property type="evidence" value="ECO:0007669"/>
    <property type="project" value="TreeGrafter"/>
</dbReference>
<dbReference type="GO" id="GO:0046872">
    <property type="term" value="F:metal ion binding"/>
    <property type="evidence" value="ECO:0007669"/>
    <property type="project" value="UniProtKB-UniRule"/>
</dbReference>
<dbReference type="GO" id="GO:0015293">
    <property type="term" value="F:symporter activity"/>
    <property type="evidence" value="ECO:0007669"/>
    <property type="project" value="UniProtKB-UniRule"/>
</dbReference>
<dbReference type="GO" id="GO:0034755">
    <property type="term" value="P:iron ion transmembrane transport"/>
    <property type="evidence" value="ECO:0007669"/>
    <property type="project" value="TreeGrafter"/>
</dbReference>
<dbReference type="HAMAP" id="MF_00221">
    <property type="entry name" value="NRAMP"/>
    <property type="match status" value="1"/>
</dbReference>
<dbReference type="InterPro" id="IPR001046">
    <property type="entry name" value="NRAMP_fam"/>
</dbReference>
<dbReference type="NCBIfam" id="TIGR01197">
    <property type="entry name" value="nramp"/>
    <property type="match status" value="1"/>
</dbReference>
<dbReference type="NCBIfam" id="NF037982">
    <property type="entry name" value="Nramp_1"/>
    <property type="match status" value="1"/>
</dbReference>
<dbReference type="NCBIfam" id="NF001923">
    <property type="entry name" value="PRK00701.1"/>
    <property type="match status" value="1"/>
</dbReference>
<dbReference type="PANTHER" id="PTHR11706:SF33">
    <property type="entry name" value="NATURAL RESISTANCE-ASSOCIATED MACROPHAGE PROTEIN 2"/>
    <property type="match status" value="1"/>
</dbReference>
<dbReference type="PANTHER" id="PTHR11706">
    <property type="entry name" value="SOLUTE CARRIER PROTEIN FAMILY 11 MEMBER"/>
    <property type="match status" value="1"/>
</dbReference>
<dbReference type="Pfam" id="PF01566">
    <property type="entry name" value="Nramp"/>
    <property type="match status" value="1"/>
</dbReference>
<dbReference type="PRINTS" id="PR00447">
    <property type="entry name" value="NATRESASSCMP"/>
</dbReference>
<keyword id="KW-0997">Cell inner membrane</keyword>
<keyword id="KW-1003">Cell membrane</keyword>
<keyword id="KW-0406">Ion transport</keyword>
<keyword id="KW-0472">Membrane</keyword>
<keyword id="KW-1185">Reference proteome</keyword>
<keyword id="KW-0769">Symport</keyword>
<keyword id="KW-0812">Transmembrane</keyword>
<keyword id="KW-1133">Transmembrane helix</keyword>
<keyword id="KW-0813">Transport</keyword>
<gene>
    <name evidence="1" type="primary">mntH</name>
    <name type="ordered locus">Ecok1_23130</name>
    <name type="ORF">APECO1_4146</name>
</gene>
<evidence type="ECO:0000255" key="1">
    <source>
        <dbReference type="HAMAP-Rule" id="MF_00221"/>
    </source>
</evidence>
<sequence>MTNYRVESSSGRAARKMRLALMGPAFIAAIGYIDPGNFATNIQAGASFGYQLLWVVVWANLMAMLIQILSAKLGIATGKNLAEQIRDHYPRPVVWFYWVQAEIIAMATDLAEFIGAAIGFKLILGVSLLQGAVLTGIATFLILMLQRRGQKPLEKVIGGLLLFVAAAYIVELIFSQPNLAQLGKGMVIPSLPTSEAVFLAAGVLGATIMPHVIYLHSSLTQHLHGGSRQQRYSATKWDVAIAMTIAGFVNLAMMATAAAAFHFSGHTGVADLDEAYLTLQPLLSHAAATVFGLSLVAAGLSSTVVGTLAGQVVMQGFIRFHIPLWVRRTVTMLPSFIVILMGLDPTRILVMSQVLLSFGIALALVPLLIFTSDSKLMGDLVNSKRVKQTGWVIVVLVVALNIWLLVGTALGL</sequence>
<organism>
    <name type="scientific">Escherichia coli O1:K1 / APEC</name>
    <dbReference type="NCBI Taxonomy" id="405955"/>
    <lineage>
        <taxon>Bacteria</taxon>
        <taxon>Pseudomonadati</taxon>
        <taxon>Pseudomonadota</taxon>
        <taxon>Gammaproteobacteria</taxon>
        <taxon>Enterobacterales</taxon>
        <taxon>Enterobacteriaceae</taxon>
        <taxon>Escherichia</taxon>
    </lineage>
</organism>
<feature type="chain" id="PRO_1000024100" description="Divalent metal cation transporter MntH">
    <location>
        <begin position="1"/>
        <end position="412"/>
    </location>
</feature>
<feature type="topological domain" description="Cytoplasmic" evidence="1">
    <location>
        <begin position="1"/>
        <end position="19"/>
    </location>
</feature>
<feature type="transmembrane region" description="Helical" evidence="1">
    <location>
        <begin position="20"/>
        <end position="39"/>
    </location>
</feature>
<feature type="topological domain" description="Periplasmic" evidence="1">
    <location>
        <begin position="40"/>
        <end position="51"/>
    </location>
</feature>
<feature type="transmembrane region" description="Helical" evidence="1">
    <location>
        <begin position="52"/>
        <end position="71"/>
    </location>
</feature>
<feature type="topological domain" description="Cytoplasmic" evidence="1">
    <location>
        <begin position="72"/>
        <end position="95"/>
    </location>
</feature>
<feature type="transmembrane region" description="Helical" evidence="1">
    <location>
        <begin position="96"/>
        <end position="118"/>
    </location>
</feature>
<feature type="topological domain" description="Periplasmic" evidence="1">
    <location>
        <begin position="119"/>
        <end position="125"/>
    </location>
</feature>
<feature type="transmembrane region" description="Helical" evidence="1">
    <location>
        <begin position="126"/>
        <end position="145"/>
    </location>
</feature>
<feature type="topological domain" description="Cytoplasmic" evidence="1">
    <location>
        <begin position="146"/>
        <end position="155"/>
    </location>
</feature>
<feature type="transmembrane region" description="Helical" evidence="1">
    <location>
        <begin position="156"/>
        <end position="175"/>
    </location>
</feature>
<feature type="topological domain" description="Periplasmic" evidence="1">
    <location>
        <begin position="176"/>
        <end position="196"/>
    </location>
</feature>
<feature type="transmembrane region" description="Helical" evidence="1">
    <location>
        <begin position="197"/>
        <end position="220"/>
    </location>
</feature>
<feature type="topological domain" description="Cytoplasmic" evidence="1">
    <location>
        <begin position="221"/>
        <end position="238"/>
    </location>
</feature>
<feature type="transmembrane region" description="Helical" evidence="1">
    <location>
        <begin position="239"/>
        <end position="258"/>
    </location>
</feature>
<feature type="topological domain" description="Periplasmic" evidence="1">
    <location>
        <begin position="259"/>
        <end position="276"/>
    </location>
</feature>
<feature type="transmembrane region" description="Helical" evidence="1">
    <location>
        <begin position="277"/>
        <end position="297"/>
    </location>
</feature>
<feature type="topological domain" description="Cytoplasmic" evidence="1">
    <location>
        <begin position="298"/>
        <end position="327"/>
    </location>
</feature>
<feature type="transmembrane region" description="Helical" evidence="1">
    <location>
        <begin position="328"/>
        <end position="344"/>
    </location>
</feature>
<feature type="topological domain" description="Periplasmic" evidence="1">
    <location>
        <begin position="345"/>
        <end position="350"/>
    </location>
</feature>
<feature type="transmembrane region" description="Helical" evidence="1">
    <location>
        <begin position="351"/>
        <end position="370"/>
    </location>
</feature>
<feature type="topological domain" description="Cytoplasmic" evidence="1">
    <location>
        <begin position="371"/>
        <end position="387"/>
    </location>
</feature>
<feature type="transmembrane region" description="Helical" evidence="1">
    <location>
        <begin position="388"/>
        <end position="406"/>
    </location>
</feature>
<feature type="topological domain" description="Periplasmic" evidence="1">
    <location>
        <begin position="407"/>
        <end position="412"/>
    </location>
</feature>
<reference key="1">
    <citation type="journal article" date="2007" name="J. Bacteriol.">
        <title>The genome sequence of avian pathogenic Escherichia coli strain O1:K1:H7 shares strong similarities with human extraintestinal pathogenic E. coli genomes.</title>
        <authorList>
            <person name="Johnson T.J."/>
            <person name="Kariyawasam S."/>
            <person name="Wannemuehler Y."/>
            <person name="Mangiamele P."/>
            <person name="Johnson S.J."/>
            <person name="Doetkott C."/>
            <person name="Skyberg J.A."/>
            <person name="Lynne A.M."/>
            <person name="Johnson J.R."/>
            <person name="Nolan L.K."/>
        </authorList>
    </citation>
    <scope>NUCLEOTIDE SEQUENCE [LARGE SCALE GENOMIC DNA]</scope>
</reference>
<proteinExistence type="inferred from homology"/>